<keyword id="KW-0067">ATP-binding</keyword>
<keyword id="KW-0143">Chaperone</keyword>
<keyword id="KW-0963">Cytoplasm</keyword>
<keyword id="KW-0547">Nucleotide-binding</keyword>
<feature type="chain" id="PRO_0000160561" description="ATP-dependent protease ATPase subunit HslU">
    <location>
        <begin position="1"/>
        <end position="443"/>
    </location>
</feature>
<feature type="region of interest" description="Disordered" evidence="2">
    <location>
        <begin position="137"/>
        <end position="156"/>
    </location>
</feature>
<feature type="compositionally biased region" description="Polar residues" evidence="2">
    <location>
        <begin position="145"/>
        <end position="156"/>
    </location>
</feature>
<feature type="binding site" evidence="1">
    <location>
        <position position="18"/>
    </location>
    <ligand>
        <name>ATP</name>
        <dbReference type="ChEBI" id="CHEBI:30616"/>
    </ligand>
</feature>
<feature type="binding site" evidence="1">
    <location>
        <begin position="60"/>
        <end position="65"/>
    </location>
    <ligand>
        <name>ATP</name>
        <dbReference type="ChEBI" id="CHEBI:30616"/>
    </ligand>
</feature>
<feature type="binding site" evidence="1">
    <location>
        <position position="256"/>
    </location>
    <ligand>
        <name>ATP</name>
        <dbReference type="ChEBI" id="CHEBI:30616"/>
    </ligand>
</feature>
<feature type="binding site" evidence="1">
    <location>
        <position position="321"/>
    </location>
    <ligand>
        <name>ATP</name>
        <dbReference type="ChEBI" id="CHEBI:30616"/>
    </ligand>
</feature>
<feature type="binding site" evidence="1">
    <location>
        <position position="393"/>
    </location>
    <ligand>
        <name>ATP</name>
        <dbReference type="ChEBI" id="CHEBI:30616"/>
    </ligand>
</feature>
<organism>
    <name type="scientific">Vibrio vulnificus (strain YJ016)</name>
    <dbReference type="NCBI Taxonomy" id="196600"/>
    <lineage>
        <taxon>Bacteria</taxon>
        <taxon>Pseudomonadati</taxon>
        <taxon>Pseudomonadota</taxon>
        <taxon>Gammaproteobacteria</taxon>
        <taxon>Vibrionales</taxon>
        <taxon>Vibrionaceae</taxon>
        <taxon>Vibrio</taxon>
    </lineage>
</organism>
<evidence type="ECO:0000255" key="1">
    <source>
        <dbReference type="HAMAP-Rule" id="MF_00249"/>
    </source>
</evidence>
<evidence type="ECO:0000256" key="2">
    <source>
        <dbReference type="SAM" id="MobiDB-lite"/>
    </source>
</evidence>
<evidence type="ECO:0000305" key="3"/>
<name>HSLU_VIBVY</name>
<sequence>MSEMTPREIVHELNRHIIGQDNAKRSVAIALRNRWRRMQLEESLRVEVTPKNILMIGPTGVGKTEIARRLAKLANAPFIKVEATKFTEVGYVGKEVESIIRDLTDVAVKLTHQQAMEKVKFRAEELAEERILDALLPPPRDAWGQNEQSEDTSNTRQIFRKKLREGKLDDKEIEINVAAPQMGVEIMAPPGMEEMTNQLQGMFQSLAGNTSKKRKLKIKDAFKALIEEEAAKLVNQDELKEQAIYSVENNGIVFIDEIDKICKRGESSGPDVSREGVQRDLLPLIEGSTVSTKHGMVKTDHILFIASGAFQVAKPSDLIPELQGRLPIRVELEALSSHDFKRILTEPRASLTEQYVALMKTEDVDIEFTEDGITQIAEAAWTVNETTENIGARRLHTVMERLMDEISFDATEKSGTKFVIDAAYVQQRLGEFVEDEDLSRFIL</sequence>
<proteinExistence type="inferred from homology"/>
<protein>
    <recommendedName>
        <fullName evidence="1">ATP-dependent protease ATPase subunit HslU</fullName>
    </recommendedName>
    <alternativeName>
        <fullName evidence="1">Unfoldase HslU</fullName>
    </alternativeName>
</protein>
<accession>Q7MH56</accession>
<comment type="function">
    <text evidence="1">ATPase subunit of a proteasome-like degradation complex; this subunit has chaperone activity. The binding of ATP and its subsequent hydrolysis by HslU are essential for unfolding of protein substrates subsequently hydrolyzed by HslV. HslU recognizes the N-terminal part of its protein substrates and unfolds these before they are guided to HslV for hydrolysis.</text>
</comment>
<comment type="subunit">
    <text evidence="1">A double ring-shaped homohexamer of HslV is capped on each side by a ring-shaped HslU homohexamer. The assembly of the HslU/HslV complex is dependent on binding of ATP.</text>
</comment>
<comment type="subcellular location">
    <subcellularLocation>
        <location evidence="1">Cytoplasm</location>
    </subcellularLocation>
</comment>
<comment type="similarity">
    <text evidence="1">Belongs to the ClpX chaperone family. HslU subfamily.</text>
</comment>
<comment type="sequence caution" evidence="3">
    <conflict type="erroneous initiation">
        <sequence resource="EMBL-CDS" id="BAC95780"/>
    </conflict>
</comment>
<dbReference type="EMBL" id="BA000037">
    <property type="protein sequence ID" value="BAC95780.1"/>
    <property type="status" value="ALT_INIT"/>
    <property type="molecule type" value="Genomic_DNA"/>
</dbReference>
<dbReference type="RefSeq" id="WP_011079331.1">
    <property type="nucleotide sequence ID" value="NC_005139.1"/>
</dbReference>
<dbReference type="SMR" id="Q7MH56"/>
<dbReference type="STRING" id="672.VV93_v1c27440"/>
<dbReference type="GeneID" id="93895620"/>
<dbReference type="KEGG" id="vvy:VV3016"/>
<dbReference type="eggNOG" id="COG1220">
    <property type="taxonomic scope" value="Bacteria"/>
</dbReference>
<dbReference type="HOGENOM" id="CLU_033123_0_0_6"/>
<dbReference type="Proteomes" id="UP000002675">
    <property type="component" value="Chromosome I"/>
</dbReference>
<dbReference type="GO" id="GO:0009376">
    <property type="term" value="C:HslUV protease complex"/>
    <property type="evidence" value="ECO:0007669"/>
    <property type="project" value="UniProtKB-UniRule"/>
</dbReference>
<dbReference type="GO" id="GO:0005524">
    <property type="term" value="F:ATP binding"/>
    <property type="evidence" value="ECO:0007669"/>
    <property type="project" value="UniProtKB-UniRule"/>
</dbReference>
<dbReference type="GO" id="GO:0016887">
    <property type="term" value="F:ATP hydrolysis activity"/>
    <property type="evidence" value="ECO:0007669"/>
    <property type="project" value="InterPro"/>
</dbReference>
<dbReference type="GO" id="GO:0008233">
    <property type="term" value="F:peptidase activity"/>
    <property type="evidence" value="ECO:0007669"/>
    <property type="project" value="InterPro"/>
</dbReference>
<dbReference type="GO" id="GO:0036402">
    <property type="term" value="F:proteasome-activating activity"/>
    <property type="evidence" value="ECO:0007669"/>
    <property type="project" value="UniProtKB-UniRule"/>
</dbReference>
<dbReference type="GO" id="GO:0043335">
    <property type="term" value="P:protein unfolding"/>
    <property type="evidence" value="ECO:0007669"/>
    <property type="project" value="UniProtKB-UniRule"/>
</dbReference>
<dbReference type="GO" id="GO:0051603">
    <property type="term" value="P:proteolysis involved in protein catabolic process"/>
    <property type="evidence" value="ECO:0007669"/>
    <property type="project" value="TreeGrafter"/>
</dbReference>
<dbReference type="CDD" id="cd19498">
    <property type="entry name" value="RecA-like_HslU"/>
    <property type="match status" value="1"/>
</dbReference>
<dbReference type="FunFam" id="1.10.8.10:FF:000028">
    <property type="entry name" value="ATP-dependent protease ATPase subunit HslU"/>
    <property type="match status" value="1"/>
</dbReference>
<dbReference type="FunFam" id="1.10.8.60:FF:000027">
    <property type="entry name" value="ATP-dependent protease ATPase subunit HslU"/>
    <property type="match status" value="1"/>
</dbReference>
<dbReference type="FunFam" id="3.40.50.300:FF:000213">
    <property type="entry name" value="ATP-dependent protease ATPase subunit HslU"/>
    <property type="match status" value="1"/>
</dbReference>
<dbReference type="FunFam" id="3.40.50.300:FF:000220">
    <property type="entry name" value="ATP-dependent protease ATPase subunit HslU"/>
    <property type="match status" value="1"/>
</dbReference>
<dbReference type="Gene3D" id="1.10.8.60">
    <property type="match status" value="1"/>
</dbReference>
<dbReference type="Gene3D" id="1.10.8.10">
    <property type="entry name" value="DNA helicase RuvA subunit, C-terminal domain"/>
    <property type="match status" value="1"/>
</dbReference>
<dbReference type="Gene3D" id="3.40.50.300">
    <property type="entry name" value="P-loop containing nucleotide triphosphate hydrolases"/>
    <property type="match status" value="2"/>
</dbReference>
<dbReference type="HAMAP" id="MF_00249">
    <property type="entry name" value="HslU"/>
    <property type="match status" value="1"/>
</dbReference>
<dbReference type="InterPro" id="IPR003593">
    <property type="entry name" value="AAA+_ATPase"/>
</dbReference>
<dbReference type="InterPro" id="IPR050052">
    <property type="entry name" value="ATP-dep_Clp_protease_ClpX"/>
</dbReference>
<dbReference type="InterPro" id="IPR003959">
    <property type="entry name" value="ATPase_AAA_core"/>
</dbReference>
<dbReference type="InterPro" id="IPR019489">
    <property type="entry name" value="Clp_ATPase_C"/>
</dbReference>
<dbReference type="InterPro" id="IPR004491">
    <property type="entry name" value="HslU"/>
</dbReference>
<dbReference type="InterPro" id="IPR027417">
    <property type="entry name" value="P-loop_NTPase"/>
</dbReference>
<dbReference type="NCBIfam" id="TIGR00390">
    <property type="entry name" value="hslU"/>
    <property type="match status" value="1"/>
</dbReference>
<dbReference type="NCBIfam" id="NF003544">
    <property type="entry name" value="PRK05201.1"/>
    <property type="match status" value="1"/>
</dbReference>
<dbReference type="PANTHER" id="PTHR48102">
    <property type="entry name" value="ATP-DEPENDENT CLP PROTEASE ATP-BINDING SUBUNIT CLPX-LIKE, MITOCHONDRIAL-RELATED"/>
    <property type="match status" value="1"/>
</dbReference>
<dbReference type="PANTHER" id="PTHR48102:SF3">
    <property type="entry name" value="ATP-DEPENDENT PROTEASE ATPASE SUBUNIT HSLU"/>
    <property type="match status" value="1"/>
</dbReference>
<dbReference type="Pfam" id="PF00004">
    <property type="entry name" value="AAA"/>
    <property type="match status" value="1"/>
</dbReference>
<dbReference type="Pfam" id="PF07724">
    <property type="entry name" value="AAA_2"/>
    <property type="match status" value="1"/>
</dbReference>
<dbReference type="SMART" id="SM00382">
    <property type="entry name" value="AAA"/>
    <property type="match status" value="1"/>
</dbReference>
<dbReference type="SMART" id="SM01086">
    <property type="entry name" value="ClpB_D2-small"/>
    <property type="match status" value="1"/>
</dbReference>
<dbReference type="SUPFAM" id="SSF52540">
    <property type="entry name" value="P-loop containing nucleoside triphosphate hydrolases"/>
    <property type="match status" value="1"/>
</dbReference>
<reference key="1">
    <citation type="journal article" date="2003" name="Genome Res.">
        <title>Comparative genome analysis of Vibrio vulnificus, a marine pathogen.</title>
        <authorList>
            <person name="Chen C.-Y."/>
            <person name="Wu K.-M."/>
            <person name="Chang Y.-C."/>
            <person name="Chang C.-H."/>
            <person name="Tsai H.-C."/>
            <person name="Liao T.-L."/>
            <person name="Liu Y.-M."/>
            <person name="Chen H.-J."/>
            <person name="Shen A.B.-T."/>
            <person name="Li J.-C."/>
            <person name="Su T.-L."/>
            <person name="Shao C.-P."/>
            <person name="Lee C.-T."/>
            <person name="Hor L.-I."/>
            <person name="Tsai S.-F."/>
        </authorList>
    </citation>
    <scope>NUCLEOTIDE SEQUENCE [LARGE SCALE GENOMIC DNA]</scope>
    <source>
        <strain>YJ016</strain>
    </source>
</reference>
<gene>
    <name evidence="1" type="primary">hslU</name>
    <name type="ordered locus">VV3016</name>
</gene>